<name>FDHD_STAAM</name>
<proteinExistence type="inferred from homology"/>
<organism>
    <name type="scientific">Staphylococcus aureus (strain Mu50 / ATCC 700699)</name>
    <dbReference type="NCBI Taxonomy" id="158878"/>
    <lineage>
        <taxon>Bacteria</taxon>
        <taxon>Bacillati</taxon>
        <taxon>Bacillota</taxon>
        <taxon>Bacilli</taxon>
        <taxon>Bacillales</taxon>
        <taxon>Staphylococcaceae</taxon>
        <taxon>Staphylococcus</taxon>
    </lineage>
</organism>
<reference key="1">
    <citation type="journal article" date="2001" name="Lancet">
        <title>Whole genome sequencing of meticillin-resistant Staphylococcus aureus.</title>
        <authorList>
            <person name="Kuroda M."/>
            <person name="Ohta T."/>
            <person name="Uchiyama I."/>
            <person name="Baba T."/>
            <person name="Yuzawa H."/>
            <person name="Kobayashi I."/>
            <person name="Cui L."/>
            <person name="Oguchi A."/>
            <person name="Aoki K."/>
            <person name="Nagai Y."/>
            <person name="Lian J.-Q."/>
            <person name="Ito T."/>
            <person name="Kanamori M."/>
            <person name="Matsumaru H."/>
            <person name="Maruyama A."/>
            <person name="Murakami H."/>
            <person name="Hosoyama A."/>
            <person name="Mizutani-Ui Y."/>
            <person name="Takahashi N.K."/>
            <person name="Sawano T."/>
            <person name="Inoue R."/>
            <person name="Kaito C."/>
            <person name="Sekimizu K."/>
            <person name="Hirakawa H."/>
            <person name="Kuhara S."/>
            <person name="Goto S."/>
            <person name="Yabuzaki J."/>
            <person name="Kanehisa M."/>
            <person name="Yamashita A."/>
            <person name="Oshima K."/>
            <person name="Furuya K."/>
            <person name="Yoshino C."/>
            <person name="Shiba T."/>
            <person name="Hattori M."/>
            <person name="Ogasawara N."/>
            <person name="Hayashi H."/>
            <person name="Hiramatsu K."/>
        </authorList>
    </citation>
    <scope>NUCLEOTIDE SEQUENCE [LARGE SCALE GENOMIC DNA]</scope>
    <source>
        <strain>Mu50 / ATCC 700699</strain>
    </source>
</reference>
<comment type="function">
    <text evidence="1">Required for formate dehydrogenase (FDH) activity. Acts as a sulfur carrier protein that transfers sulfur from IscS to the molybdenum cofactor prior to its insertion into FDH.</text>
</comment>
<comment type="subcellular location">
    <subcellularLocation>
        <location evidence="1">Cytoplasm</location>
    </subcellularLocation>
</comment>
<comment type="similarity">
    <text evidence="1">Belongs to the FdhD family.</text>
</comment>
<accession>P64120</accession>
<accession>Q99RZ2</accession>
<dbReference type="EMBL" id="BA000017">
    <property type="protein sequence ID" value="BAB58442.1"/>
    <property type="molecule type" value="Genomic_DNA"/>
</dbReference>
<dbReference type="RefSeq" id="WP_001030823.1">
    <property type="nucleotide sequence ID" value="NC_002758.2"/>
</dbReference>
<dbReference type="SMR" id="P64120"/>
<dbReference type="KEGG" id="sav:SAV2280"/>
<dbReference type="HOGENOM" id="CLU_056887_4_1_9"/>
<dbReference type="PhylomeDB" id="P64120"/>
<dbReference type="Proteomes" id="UP000002481">
    <property type="component" value="Chromosome"/>
</dbReference>
<dbReference type="GO" id="GO:0005737">
    <property type="term" value="C:cytoplasm"/>
    <property type="evidence" value="ECO:0007669"/>
    <property type="project" value="UniProtKB-SubCell"/>
</dbReference>
<dbReference type="GO" id="GO:0097163">
    <property type="term" value="F:sulfur carrier activity"/>
    <property type="evidence" value="ECO:0007669"/>
    <property type="project" value="UniProtKB-UniRule"/>
</dbReference>
<dbReference type="GO" id="GO:0016783">
    <property type="term" value="F:sulfurtransferase activity"/>
    <property type="evidence" value="ECO:0007669"/>
    <property type="project" value="InterPro"/>
</dbReference>
<dbReference type="GO" id="GO:0006777">
    <property type="term" value="P:Mo-molybdopterin cofactor biosynthetic process"/>
    <property type="evidence" value="ECO:0007669"/>
    <property type="project" value="UniProtKB-UniRule"/>
</dbReference>
<dbReference type="Gene3D" id="3.10.20.10">
    <property type="match status" value="1"/>
</dbReference>
<dbReference type="Gene3D" id="3.40.140.10">
    <property type="entry name" value="Cytidine Deaminase, domain 2"/>
    <property type="match status" value="1"/>
</dbReference>
<dbReference type="HAMAP" id="MF_00187">
    <property type="entry name" value="FdhD"/>
    <property type="match status" value="1"/>
</dbReference>
<dbReference type="InterPro" id="IPR016193">
    <property type="entry name" value="Cytidine_deaminase-like"/>
</dbReference>
<dbReference type="InterPro" id="IPR003786">
    <property type="entry name" value="FdhD"/>
</dbReference>
<dbReference type="NCBIfam" id="TIGR00129">
    <property type="entry name" value="fdhD_narQ"/>
    <property type="match status" value="1"/>
</dbReference>
<dbReference type="PANTHER" id="PTHR30592">
    <property type="entry name" value="FORMATE DEHYDROGENASE"/>
    <property type="match status" value="1"/>
</dbReference>
<dbReference type="PANTHER" id="PTHR30592:SF1">
    <property type="entry name" value="SULFUR CARRIER PROTEIN FDHD"/>
    <property type="match status" value="1"/>
</dbReference>
<dbReference type="Pfam" id="PF02634">
    <property type="entry name" value="FdhD-NarQ"/>
    <property type="match status" value="1"/>
</dbReference>
<dbReference type="PIRSF" id="PIRSF015626">
    <property type="entry name" value="FdhD"/>
    <property type="match status" value="1"/>
</dbReference>
<dbReference type="SUPFAM" id="SSF53927">
    <property type="entry name" value="Cytidine deaminase-like"/>
    <property type="match status" value="1"/>
</dbReference>
<sequence>MNKDVSLGQPIVRYEDGKLFNTTDQYVTEFPLTIMVNGEEFATVICSPTNLEELVIGFLASEGAILKRDELKSVLIDDSKGFAHVELNKDLGDRFQYSTKRMIASCCGKSREFYFQNDAAIAKTSMSKITLTPIQIINMMTRLQSASHIYQETGGLHNAAISDGLTFFVHRQDIGRHNALDKLYGFCIQRHITVRDKVLIFSGRISSEILIKAAKIGVGVILSKSAPTTLAVTLANDLNITAVGFIRNGGFNIYSHPERIIDSEQ</sequence>
<feature type="chain" id="PRO_0000152923" description="Sulfur carrier protein FdhD">
    <location>
        <begin position="1"/>
        <end position="265"/>
    </location>
</feature>
<feature type="active site" description="Cysteine persulfide intermediate" evidence="1">
    <location>
        <position position="107"/>
    </location>
</feature>
<keyword id="KW-0963">Cytoplasm</keyword>
<keyword id="KW-0501">Molybdenum cofactor biosynthesis</keyword>
<gene>
    <name evidence="1" type="primary">fdhD</name>
    <name type="synonym">narQ</name>
    <name type="ordered locus">SAV2280</name>
</gene>
<protein>
    <recommendedName>
        <fullName evidence="1">Sulfur carrier protein FdhD</fullName>
    </recommendedName>
</protein>
<evidence type="ECO:0000255" key="1">
    <source>
        <dbReference type="HAMAP-Rule" id="MF_00187"/>
    </source>
</evidence>